<name>ATD3C_HUMAN</name>
<reference key="1">
    <citation type="journal article" date="2004" name="Nat. Genet.">
        <title>Complete sequencing and characterization of 21,243 full-length human cDNAs.</title>
        <authorList>
            <person name="Ota T."/>
            <person name="Suzuki Y."/>
            <person name="Nishikawa T."/>
            <person name="Otsuki T."/>
            <person name="Sugiyama T."/>
            <person name="Irie R."/>
            <person name="Wakamatsu A."/>
            <person name="Hayashi K."/>
            <person name="Sato H."/>
            <person name="Nagai K."/>
            <person name="Kimura K."/>
            <person name="Makita H."/>
            <person name="Sekine M."/>
            <person name="Obayashi M."/>
            <person name="Nishi T."/>
            <person name="Shibahara T."/>
            <person name="Tanaka T."/>
            <person name="Ishii S."/>
            <person name="Yamamoto J."/>
            <person name="Saito K."/>
            <person name="Kawai Y."/>
            <person name="Isono Y."/>
            <person name="Nakamura Y."/>
            <person name="Nagahari K."/>
            <person name="Murakami K."/>
            <person name="Yasuda T."/>
            <person name="Iwayanagi T."/>
            <person name="Wagatsuma M."/>
            <person name="Shiratori A."/>
            <person name="Sudo H."/>
            <person name="Hosoiri T."/>
            <person name="Kaku Y."/>
            <person name="Kodaira H."/>
            <person name="Kondo H."/>
            <person name="Sugawara M."/>
            <person name="Takahashi M."/>
            <person name="Kanda K."/>
            <person name="Yokoi T."/>
            <person name="Furuya T."/>
            <person name="Kikkawa E."/>
            <person name="Omura Y."/>
            <person name="Abe K."/>
            <person name="Kamihara K."/>
            <person name="Katsuta N."/>
            <person name="Sato K."/>
            <person name="Tanikawa M."/>
            <person name="Yamazaki M."/>
            <person name="Ninomiya K."/>
            <person name="Ishibashi T."/>
            <person name="Yamashita H."/>
            <person name="Murakawa K."/>
            <person name="Fujimori K."/>
            <person name="Tanai H."/>
            <person name="Kimata M."/>
            <person name="Watanabe M."/>
            <person name="Hiraoka S."/>
            <person name="Chiba Y."/>
            <person name="Ishida S."/>
            <person name="Ono Y."/>
            <person name="Takiguchi S."/>
            <person name="Watanabe S."/>
            <person name="Yosida M."/>
            <person name="Hotuta T."/>
            <person name="Kusano J."/>
            <person name="Kanehori K."/>
            <person name="Takahashi-Fujii A."/>
            <person name="Hara H."/>
            <person name="Tanase T.-O."/>
            <person name="Nomura Y."/>
            <person name="Togiya S."/>
            <person name="Komai F."/>
            <person name="Hara R."/>
            <person name="Takeuchi K."/>
            <person name="Arita M."/>
            <person name="Imose N."/>
            <person name="Musashino K."/>
            <person name="Yuuki H."/>
            <person name="Oshima A."/>
            <person name="Sasaki N."/>
            <person name="Aotsuka S."/>
            <person name="Yoshikawa Y."/>
            <person name="Matsunawa H."/>
            <person name="Ichihara T."/>
            <person name="Shiohata N."/>
            <person name="Sano S."/>
            <person name="Moriya S."/>
            <person name="Momiyama H."/>
            <person name="Satoh N."/>
            <person name="Takami S."/>
            <person name="Terashima Y."/>
            <person name="Suzuki O."/>
            <person name="Nakagawa S."/>
            <person name="Senoh A."/>
            <person name="Mizoguchi H."/>
            <person name="Goto Y."/>
            <person name="Shimizu F."/>
            <person name="Wakebe H."/>
            <person name="Hishigaki H."/>
            <person name="Watanabe T."/>
            <person name="Sugiyama A."/>
            <person name="Takemoto M."/>
            <person name="Kawakami B."/>
            <person name="Yamazaki M."/>
            <person name="Watanabe K."/>
            <person name="Kumagai A."/>
            <person name="Itakura S."/>
            <person name="Fukuzumi Y."/>
            <person name="Fujimori Y."/>
            <person name="Komiyama M."/>
            <person name="Tashiro H."/>
            <person name="Tanigami A."/>
            <person name="Fujiwara T."/>
            <person name="Ono T."/>
            <person name="Yamada K."/>
            <person name="Fujii Y."/>
            <person name="Ozaki K."/>
            <person name="Hirao M."/>
            <person name="Ohmori Y."/>
            <person name="Kawabata A."/>
            <person name="Hikiji T."/>
            <person name="Kobatake N."/>
            <person name="Inagaki H."/>
            <person name="Ikema Y."/>
            <person name="Okamoto S."/>
            <person name="Okitani R."/>
            <person name="Kawakami T."/>
            <person name="Noguchi S."/>
            <person name="Itoh T."/>
            <person name="Shigeta K."/>
            <person name="Senba T."/>
            <person name="Matsumura K."/>
            <person name="Nakajima Y."/>
            <person name="Mizuno T."/>
            <person name="Morinaga M."/>
            <person name="Sasaki M."/>
            <person name="Togashi T."/>
            <person name="Oyama M."/>
            <person name="Hata H."/>
            <person name="Watanabe M."/>
            <person name="Komatsu T."/>
            <person name="Mizushima-Sugano J."/>
            <person name="Satoh T."/>
            <person name="Shirai Y."/>
            <person name="Takahashi Y."/>
            <person name="Nakagawa K."/>
            <person name="Okumura K."/>
            <person name="Nagase T."/>
            <person name="Nomura N."/>
            <person name="Kikuchi H."/>
            <person name="Masuho Y."/>
            <person name="Yamashita R."/>
            <person name="Nakai K."/>
            <person name="Yada T."/>
            <person name="Nakamura Y."/>
            <person name="Ohara O."/>
            <person name="Isogai T."/>
            <person name="Sugano S."/>
        </authorList>
    </citation>
    <scope>NUCLEOTIDE SEQUENCE [LARGE SCALE MRNA]</scope>
    <source>
        <tissue>Brain cortex</tissue>
        <tissue>Kidney</tissue>
    </source>
</reference>
<reference key="2">
    <citation type="journal article" date="2006" name="Nature">
        <title>The DNA sequence and biological annotation of human chromosome 1.</title>
        <authorList>
            <person name="Gregory S.G."/>
            <person name="Barlow K.F."/>
            <person name="McLay K.E."/>
            <person name="Kaul R."/>
            <person name="Swarbreck D."/>
            <person name="Dunham A."/>
            <person name="Scott C.E."/>
            <person name="Howe K.L."/>
            <person name="Woodfine K."/>
            <person name="Spencer C.C.A."/>
            <person name="Jones M.C."/>
            <person name="Gillson C."/>
            <person name="Searle S."/>
            <person name="Zhou Y."/>
            <person name="Kokocinski F."/>
            <person name="McDonald L."/>
            <person name="Evans R."/>
            <person name="Phillips K."/>
            <person name="Atkinson A."/>
            <person name="Cooper R."/>
            <person name="Jones C."/>
            <person name="Hall R.E."/>
            <person name="Andrews T.D."/>
            <person name="Lloyd C."/>
            <person name="Ainscough R."/>
            <person name="Almeida J.P."/>
            <person name="Ambrose K.D."/>
            <person name="Anderson F."/>
            <person name="Andrew R.W."/>
            <person name="Ashwell R.I.S."/>
            <person name="Aubin K."/>
            <person name="Babbage A.K."/>
            <person name="Bagguley C.L."/>
            <person name="Bailey J."/>
            <person name="Beasley H."/>
            <person name="Bethel G."/>
            <person name="Bird C.P."/>
            <person name="Bray-Allen S."/>
            <person name="Brown J.Y."/>
            <person name="Brown A.J."/>
            <person name="Buckley D."/>
            <person name="Burton J."/>
            <person name="Bye J."/>
            <person name="Carder C."/>
            <person name="Chapman J.C."/>
            <person name="Clark S.Y."/>
            <person name="Clarke G."/>
            <person name="Clee C."/>
            <person name="Cobley V."/>
            <person name="Collier R.E."/>
            <person name="Corby N."/>
            <person name="Coville G.J."/>
            <person name="Davies J."/>
            <person name="Deadman R."/>
            <person name="Dunn M."/>
            <person name="Earthrowl M."/>
            <person name="Ellington A.G."/>
            <person name="Errington H."/>
            <person name="Frankish A."/>
            <person name="Frankland J."/>
            <person name="French L."/>
            <person name="Garner P."/>
            <person name="Garnett J."/>
            <person name="Gay L."/>
            <person name="Ghori M.R.J."/>
            <person name="Gibson R."/>
            <person name="Gilby L.M."/>
            <person name="Gillett W."/>
            <person name="Glithero R.J."/>
            <person name="Grafham D.V."/>
            <person name="Griffiths C."/>
            <person name="Griffiths-Jones S."/>
            <person name="Grocock R."/>
            <person name="Hammond S."/>
            <person name="Harrison E.S.I."/>
            <person name="Hart E."/>
            <person name="Haugen E."/>
            <person name="Heath P.D."/>
            <person name="Holmes S."/>
            <person name="Holt K."/>
            <person name="Howden P.J."/>
            <person name="Hunt A.R."/>
            <person name="Hunt S.E."/>
            <person name="Hunter G."/>
            <person name="Isherwood J."/>
            <person name="James R."/>
            <person name="Johnson C."/>
            <person name="Johnson D."/>
            <person name="Joy A."/>
            <person name="Kay M."/>
            <person name="Kershaw J.K."/>
            <person name="Kibukawa M."/>
            <person name="Kimberley A.M."/>
            <person name="King A."/>
            <person name="Knights A.J."/>
            <person name="Lad H."/>
            <person name="Laird G."/>
            <person name="Lawlor S."/>
            <person name="Leongamornlert D.A."/>
            <person name="Lloyd D.M."/>
            <person name="Loveland J."/>
            <person name="Lovell J."/>
            <person name="Lush M.J."/>
            <person name="Lyne R."/>
            <person name="Martin S."/>
            <person name="Mashreghi-Mohammadi M."/>
            <person name="Matthews L."/>
            <person name="Matthews N.S.W."/>
            <person name="McLaren S."/>
            <person name="Milne S."/>
            <person name="Mistry S."/>
            <person name="Moore M.J.F."/>
            <person name="Nickerson T."/>
            <person name="O'Dell C.N."/>
            <person name="Oliver K."/>
            <person name="Palmeiri A."/>
            <person name="Palmer S.A."/>
            <person name="Parker A."/>
            <person name="Patel D."/>
            <person name="Pearce A.V."/>
            <person name="Peck A.I."/>
            <person name="Pelan S."/>
            <person name="Phelps K."/>
            <person name="Phillimore B.J."/>
            <person name="Plumb R."/>
            <person name="Rajan J."/>
            <person name="Raymond C."/>
            <person name="Rouse G."/>
            <person name="Saenphimmachak C."/>
            <person name="Sehra H.K."/>
            <person name="Sheridan E."/>
            <person name="Shownkeen R."/>
            <person name="Sims S."/>
            <person name="Skuce C.D."/>
            <person name="Smith M."/>
            <person name="Steward C."/>
            <person name="Subramanian S."/>
            <person name="Sycamore N."/>
            <person name="Tracey A."/>
            <person name="Tromans A."/>
            <person name="Van Helmond Z."/>
            <person name="Wall M."/>
            <person name="Wallis J.M."/>
            <person name="White S."/>
            <person name="Whitehead S.L."/>
            <person name="Wilkinson J.E."/>
            <person name="Willey D.L."/>
            <person name="Williams H."/>
            <person name="Wilming L."/>
            <person name="Wray P.W."/>
            <person name="Wu Z."/>
            <person name="Coulson A."/>
            <person name="Vaudin M."/>
            <person name="Sulston J.E."/>
            <person name="Durbin R.M."/>
            <person name="Hubbard T."/>
            <person name="Wooster R."/>
            <person name="Dunham I."/>
            <person name="Carter N.P."/>
            <person name="McVean G."/>
            <person name="Ross M.T."/>
            <person name="Harrow J."/>
            <person name="Olson M.V."/>
            <person name="Beck S."/>
            <person name="Rogers J."/>
            <person name="Bentley D.R."/>
        </authorList>
    </citation>
    <scope>NUCLEOTIDE SEQUENCE [LARGE SCALE GENOMIC DNA]</scope>
</reference>
<reference key="3">
    <citation type="journal article" date="2004" name="Genome Res.">
        <title>The status, quality, and expansion of the NIH full-length cDNA project: the Mammalian Gene Collection (MGC).</title>
        <authorList>
            <consortium name="The MGC Project Team"/>
        </authorList>
    </citation>
    <scope>NUCLEOTIDE SEQUENCE [LARGE SCALE MRNA] OF 350-411</scope>
</reference>
<accession>Q5T2N8</accession>
<accession>Q8N1Z5</accession>
<feature type="chain" id="PRO_0000311979" description="ATPase family AAA domain-containing protein 3C">
    <location>
        <begin position="1"/>
        <end position="411"/>
    </location>
</feature>
<feature type="binding site" evidence="1">
    <location>
        <begin position="177"/>
        <end position="184"/>
    </location>
    <ligand>
        <name>ATP</name>
        <dbReference type="ChEBI" id="CHEBI:30616"/>
    </ligand>
</feature>
<organism>
    <name type="scientific">Homo sapiens</name>
    <name type="common">Human</name>
    <dbReference type="NCBI Taxonomy" id="9606"/>
    <lineage>
        <taxon>Eukaryota</taxon>
        <taxon>Metazoa</taxon>
        <taxon>Chordata</taxon>
        <taxon>Craniata</taxon>
        <taxon>Vertebrata</taxon>
        <taxon>Euteleostomi</taxon>
        <taxon>Mammalia</taxon>
        <taxon>Eutheria</taxon>
        <taxon>Euarchontoglires</taxon>
        <taxon>Primates</taxon>
        <taxon>Haplorrhini</taxon>
        <taxon>Catarrhini</taxon>
        <taxon>Hominidae</taxon>
        <taxon>Homo</taxon>
    </lineage>
</organism>
<dbReference type="EMBL" id="AK091918">
    <property type="status" value="NOT_ANNOTATED_CDS"/>
    <property type="molecule type" value="mRNA"/>
</dbReference>
<dbReference type="EMBL" id="AK094502">
    <property type="protein sequence ID" value="BAC04369.1"/>
    <property type="status" value="ALT_SEQ"/>
    <property type="molecule type" value="mRNA"/>
</dbReference>
<dbReference type="EMBL" id="AL157945">
    <property type="status" value="NOT_ANNOTATED_CDS"/>
    <property type="molecule type" value="Genomic_DNA"/>
</dbReference>
<dbReference type="EMBL" id="AL391244">
    <property type="status" value="NOT_ANNOTATED_CDS"/>
    <property type="molecule type" value="Genomic_DNA"/>
</dbReference>
<dbReference type="EMBL" id="BC101211">
    <property type="protein sequence ID" value="AAI01212.1"/>
    <property type="status" value="ALT_SEQ"/>
    <property type="molecule type" value="mRNA"/>
</dbReference>
<dbReference type="EMBL" id="BC101212">
    <property type="protein sequence ID" value="AAI01213.1"/>
    <property type="status" value="ALT_SEQ"/>
    <property type="molecule type" value="mRNA"/>
</dbReference>
<dbReference type="CCDS" id="CCDS44039.1"/>
<dbReference type="RefSeq" id="NP_001034300.2">
    <property type="nucleotide sequence ID" value="NM_001039211.3"/>
</dbReference>
<dbReference type="SMR" id="Q5T2N8"/>
<dbReference type="BioGRID" id="128521">
    <property type="interactions" value="53"/>
</dbReference>
<dbReference type="FunCoup" id="Q5T2N8">
    <property type="interactions" value="238"/>
</dbReference>
<dbReference type="IntAct" id="Q5T2N8">
    <property type="interactions" value="14"/>
</dbReference>
<dbReference type="MINT" id="Q5T2N8"/>
<dbReference type="STRING" id="9606.ENSP00000368062"/>
<dbReference type="iPTMnet" id="Q5T2N8"/>
<dbReference type="MetOSite" id="Q5T2N8"/>
<dbReference type="PhosphoSitePlus" id="Q5T2N8"/>
<dbReference type="SwissPalm" id="Q5T2N8"/>
<dbReference type="BioMuta" id="ATAD3C"/>
<dbReference type="DMDM" id="162416279"/>
<dbReference type="jPOST" id="Q5T2N8"/>
<dbReference type="MassIVE" id="Q5T2N8"/>
<dbReference type="PaxDb" id="9606-ENSP00000368062"/>
<dbReference type="PeptideAtlas" id="Q5T2N8"/>
<dbReference type="PRIDE" id="Q5T2N8"/>
<dbReference type="ProteomicsDB" id="64348"/>
<dbReference type="Antibodypedia" id="67915">
    <property type="antibodies" value="88 antibodies from 13 providers"/>
</dbReference>
<dbReference type="DNASU" id="219293"/>
<dbReference type="Ensembl" id="ENST00000378785.7">
    <property type="protein sequence ID" value="ENSP00000368062.2"/>
    <property type="gene ID" value="ENSG00000215915.10"/>
</dbReference>
<dbReference type="GeneID" id="219293"/>
<dbReference type="KEGG" id="hsa:219293"/>
<dbReference type="MANE-Select" id="ENST00000378785.7">
    <property type="protein sequence ID" value="ENSP00000368062.2"/>
    <property type="RefSeq nucleotide sequence ID" value="NM_001039211.3"/>
    <property type="RefSeq protein sequence ID" value="NP_001034300.2"/>
</dbReference>
<dbReference type="UCSC" id="uc001aft.2">
    <property type="organism name" value="human"/>
</dbReference>
<dbReference type="AGR" id="HGNC:32151"/>
<dbReference type="CTD" id="219293"/>
<dbReference type="DisGeNET" id="219293"/>
<dbReference type="GeneCards" id="ATAD3C"/>
<dbReference type="HGNC" id="HGNC:32151">
    <property type="gene designation" value="ATAD3C"/>
</dbReference>
<dbReference type="HPA" id="ENSG00000215915">
    <property type="expression patterns" value="Low tissue specificity"/>
</dbReference>
<dbReference type="MalaCards" id="ATAD3C"/>
<dbReference type="neXtProt" id="NX_Q5T2N8"/>
<dbReference type="Orphanet" id="656279">
    <property type="disease" value="1p36.33 duplication syndrome"/>
</dbReference>
<dbReference type="PharmGKB" id="PA134903201"/>
<dbReference type="VEuPathDB" id="HostDB:ENSG00000215915"/>
<dbReference type="eggNOG" id="KOG0742">
    <property type="taxonomic scope" value="Eukaryota"/>
</dbReference>
<dbReference type="GeneTree" id="ENSGT00940000165354"/>
<dbReference type="HOGENOM" id="CLU_047205_0_0_1"/>
<dbReference type="InParanoid" id="Q5T2N8"/>
<dbReference type="OMA" id="MRWLKGE"/>
<dbReference type="OrthoDB" id="199596at2759"/>
<dbReference type="PAN-GO" id="Q5T2N8">
    <property type="GO annotations" value="2 GO annotations based on evolutionary models"/>
</dbReference>
<dbReference type="PhylomeDB" id="Q5T2N8"/>
<dbReference type="TreeFam" id="TF313922"/>
<dbReference type="PathwayCommons" id="Q5T2N8"/>
<dbReference type="SignaLink" id="Q5T2N8"/>
<dbReference type="BioGRID-ORCS" id="219293">
    <property type="hits" value="11 hits in 1141 CRISPR screens"/>
</dbReference>
<dbReference type="CD-CODE" id="91857CE7">
    <property type="entry name" value="Nucleolus"/>
</dbReference>
<dbReference type="ChiTaRS" id="ATAD3C">
    <property type="organism name" value="human"/>
</dbReference>
<dbReference type="GenomeRNAi" id="219293"/>
<dbReference type="Pharos" id="Q5T2N8">
    <property type="development level" value="Tdark"/>
</dbReference>
<dbReference type="PRO" id="PR:Q5T2N8"/>
<dbReference type="Proteomes" id="UP000005640">
    <property type="component" value="Chromosome 1"/>
</dbReference>
<dbReference type="RNAct" id="Q5T2N8">
    <property type="molecule type" value="protein"/>
</dbReference>
<dbReference type="Bgee" id="ENSG00000215915">
    <property type="expression patterns" value="Expressed in body of pancreas and 96 other cell types or tissues"/>
</dbReference>
<dbReference type="ExpressionAtlas" id="Q5T2N8">
    <property type="expression patterns" value="baseline and differential"/>
</dbReference>
<dbReference type="GO" id="GO:0005739">
    <property type="term" value="C:mitochondrion"/>
    <property type="evidence" value="ECO:0000314"/>
    <property type="project" value="HPA"/>
</dbReference>
<dbReference type="GO" id="GO:0005524">
    <property type="term" value="F:ATP binding"/>
    <property type="evidence" value="ECO:0007669"/>
    <property type="project" value="UniProtKB-KW"/>
</dbReference>
<dbReference type="GO" id="GO:0016887">
    <property type="term" value="F:ATP hydrolysis activity"/>
    <property type="evidence" value="ECO:0007669"/>
    <property type="project" value="InterPro"/>
</dbReference>
<dbReference type="GO" id="GO:0007005">
    <property type="term" value="P:mitochondrion organization"/>
    <property type="evidence" value="ECO:0000318"/>
    <property type="project" value="GO_Central"/>
</dbReference>
<dbReference type="CDD" id="cd19512">
    <property type="entry name" value="RecA-like_ATAD3-like"/>
    <property type="match status" value="1"/>
</dbReference>
<dbReference type="FunFam" id="3.40.50.300:FF:000470">
    <property type="entry name" value="ATPase family, AAA domain containing 3A"/>
    <property type="match status" value="1"/>
</dbReference>
<dbReference type="Gene3D" id="3.40.50.300">
    <property type="entry name" value="P-loop containing nucleotide triphosphate hydrolases"/>
    <property type="match status" value="1"/>
</dbReference>
<dbReference type="InterPro" id="IPR003593">
    <property type="entry name" value="AAA+_ATPase"/>
</dbReference>
<dbReference type="InterPro" id="IPR021911">
    <property type="entry name" value="ATAD3_N"/>
</dbReference>
<dbReference type="InterPro" id="IPR003959">
    <property type="entry name" value="ATPase_AAA_core"/>
</dbReference>
<dbReference type="InterPro" id="IPR027417">
    <property type="entry name" value="P-loop_NTPase"/>
</dbReference>
<dbReference type="PANTHER" id="PTHR23075:SF4">
    <property type="entry name" value="ATPASE FAMILY AAA DOMAIN-CONTAINING PROTEIN 3C"/>
    <property type="match status" value="1"/>
</dbReference>
<dbReference type="PANTHER" id="PTHR23075">
    <property type="entry name" value="PUTATIVE ATP-ASE"/>
    <property type="match status" value="1"/>
</dbReference>
<dbReference type="Pfam" id="PF00004">
    <property type="entry name" value="AAA"/>
    <property type="match status" value="1"/>
</dbReference>
<dbReference type="Pfam" id="PF12037">
    <property type="entry name" value="ATAD3_N"/>
    <property type="match status" value="1"/>
</dbReference>
<dbReference type="SMART" id="SM00382">
    <property type="entry name" value="AAA"/>
    <property type="match status" value="1"/>
</dbReference>
<dbReference type="SUPFAM" id="SSF52540">
    <property type="entry name" value="P-loop containing nucleoside triphosphate hydrolases"/>
    <property type="match status" value="1"/>
</dbReference>
<proteinExistence type="evidence at protein level"/>
<evidence type="ECO:0000255" key="1"/>
<evidence type="ECO:0000305" key="2"/>
<comment type="similarity">
    <text evidence="2">Belongs to the AAA ATPase family.</text>
</comment>
<comment type="sequence caution" evidence="2">
    <conflict type="erroneous translation">
        <sequence resource="EMBL-CDS" id="AAI01212"/>
    </conflict>
    <text>Wrong choice of frame.</text>
</comment>
<comment type="sequence caution" evidence="2">
    <conflict type="erroneous translation">
        <sequence resource="EMBL-CDS" id="AAI01213"/>
    </conflict>
    <text>Wrong choice of frame.</text>
</comment>
<comment type="sequence caution" evidence="2">
    <conflict type="erroneous translation">
        <sequence resource="EMBL-CDS" id="BAC04369"/>
    </conflict>
    <text>Wrong choice of frame.</text>
</comment>
<gene>
    <name type="primary">ATAD3C</name>
</gene>
<sequence>MSKDALNLAQMQEQTLQLEQQSKLKQLVNEDLRKQEESVQKHHQTFLESIRAAGTLFGEGFRAFVTDRDKVTATVAGLTLLAVGVYSAKNATAVTGRYIEARLGKPSLVRETSRITVLEALRHPIQQVSRRLLSRPQDVLEGVVLSPSLEARVRDIAIMTRNIKKNRGLYRHILLYGPPGTGKTLFAKKLALHSGMDYAIMTGGDVAPMGREGVTAMHKLFDWANTSRRGLLLFVDEADAFLRKRATEKISEDLRATLNAFLYRTGQHSNKFMLILASCHPEQFDWAINACIDVMVHFDLPGQEERARLVRMYLNEYVLKPATEGKRRLKLAQFDYGRKCLEIARLTEGMSCRKIAQLAVSWQATAYASKDGVLTEAMMDACVQDFVQQHQQMMRWLKGERPGPEDEQPSS</sequence>
<protein>
    <recommendedName>
        <fullName>ATPase family AAA domain-containing protein 3C</fullName>
    </recommendedName>
</protein>
<keyword id="KW-0067">ATP-binding</keyword>
<keyword id="KW-0547">Nucleotide-binding</keyword>
<keyword id="KW-1267">Proteomics identification</keyword>
<keyword id="KW-1185">Reference proteome</keyword>